<name>VTM2A_HUMAN</name>
<evidence type="ECO:0000250" key="1">
    <source>
        <dbReference type="UniProtKB" id="Q8R0A6"/>
    </source>
</evidence>
<evidence type="ECO:0000255" key="2"/>
<evidence type="ECO:0000255" key="3">
    <source>
        <dbReference type="PROSITE-ProRule" id="PRU00114"/>
    </source>
</evidence>
<evidence type="ECO:0000256" key="4">
    <source>
        <dbReference type="SAM" id="MobiDB-lite"/>
    </source>
</evidence>
<evidence type="ECO:0000269" key="5">
    <source>
    </source>
</evidence>
<evidence type="ECO:0000269" key="6">
    <source>
    </source>
</evidence>
<evidence type="ECO:0000303" key="7">
    <source>
    </source>
</evidence>
<evidence type="ECO:0000305" key="8"/>
<evidence type="ECO:0000312" key="9">
    <source>
        <dbReference type="HGNC" id="HGNC:28499"/>
    </source>
</evidence>
<protein>
    <recommendedName>
        <fullName evidence="9">V-set and transmembrane domain-containing protein 2A</fullName>
    </recommendedName>
</protein>
<keyword id="KW-0025">Alternative splicing</keyword>
<keyword id="KW-0221">Differentiation</keyword>
<keyword id="KW-1015">Disulfide bond</keyword>
<keyword id="KW-0325">Glycoprotein</keyword>
<keyword id="KW-0393">Immunoglobulin domain</keyword>
<keyword id="KW-1267">Proteomics identification</keyword>
<keyword id="KW-1185">Reference proteome</keyword>
<keyword id="KW-0964">Secreted</keyword>
<keyword id="KW-0732">Signal</keyword>
<feature type="signal peptide" evidence="2">
    <location>
        <begin position="1"/>
        <end position="24"/>
    </location>
</feature>
<feature type="chain" id="PRO_0000014775" description="V-set and transmembrane domain-containing protein 2A">
    <location>
        <begin position="25"/>
        <end position="236"/>
    </location>
</feature>
<feature type="domain" description="Ig-like V-type">
    <location>
        <begin position="27"/>
        <end position="143"/>
    </location>
</feature>
<feature type="region of interest" description="Disordered" evidence="4">
    <location>
        <begin position="184"/>
        <end position="206"/>
    </location>
</feature>
<feature type="compositionally biased region" description="Polar residues" evidence="4">
    <location>
        <begin position="184"/>
        <end position="199"/>
    </location>
</feature>
<feature type="glycosylation site" description="N-linked (GlcNAc...) asparagine" evidence="2">
    <location>
        <position position="35"/>
    </location>
</feature>
<feature type="glycosylation site" description="N-linked (GlcNAc...) asparagine" evidence="2">
    <location>
        <position position="175"/>
    </location>
</feature>
<feature type="disulfide bond" evidence="3">
    <location>
        <begin position="48"/>
        <end position="127"/>
    </location>
</feature>
<feature type="splice variant" id="VSP_039817" description="In isoform 2." evidence="7">
    <original>ARIATSHGLSVLLLVCGFVKGALL</original>
    <variation>METHFEPFILPLTNAPQKGQSYRVDRFMNGDF</variation>
    <location>
        <begin position="213"/>
        <end position="236"/>
    </location>
</feature>
<feature type="sequence variant" id="VAR_047034" description="In dbSNP:rs17855529." evidence="5">
    <original>E</original>
    <variation>K</variation>
    <location>
        <position position="84"/>
    </location>
</feature>
<gene>
    <name evidence="9" type="primary">VSTM2A</name>
    <name type="synonym">VSTM2</name>
</gene>
<sequence>MMGIFLVYVGFVFFSVLYVQQGLSSQAKFTEFPRNVTATEGQNVEMSCAFQSGSASVYLEIQWWFLRGPEDLDPGAEGAGAQVELLPDRDPDSDGTKISTVKVQGNDISHKLQISKVRKKDEGLYECRVTDANYGELQEHKAQAYLKVNANSHARRMQAFEASPMWLQDMKPRKNVSAAIPSSIHGSANQRTHSTSSPQVVAKIPKQSPQSGARIATSHGLSVLLLVCGFVKGALL</sequence>
<organism>
    <name type="scientific">Homo sapiens</name>
    <name type="common">Human</name>
    <dbReference type="NCBI Taxonomy" id="9606"/>
    <lineage>
        <taxon>Eukaryota</taxon>
        <taxon>Metazoa</taxon>
        <taxon>Chordata</taxon>
        <taxon>Craniata</taxon>
        <taxon>Vertebrata</taxon>
        <taxon>Euteleostomi</taxon>
        <taxon>Mammalia</taxon>
        <taxon>Eutheria</taxon>
        <taxon>Euarchontoglires</taxon>
        <taxon>Primates</taxon>
        <taxon>Haplorrhini</taxon>
        <taxon>Catarrhini</taxon>
        <taxon>Hominidae</taxon>
        <taxon>Homo</taxon>
    </lineage>
</organism>
<dbReference type="EMBL" id="AC069313">
    <property type="status" value="NOT_ANNOTATED_CDS"/>
    <property type="molecule type" value="Genomic_DNA"/>
</dbReference>
<dbReference type="EMBL" id="CH236957">
    <property type="protein sequence ID" value="EAL23809.1"/>
    <property type="status" value="ALT_INIT"/>
    <property type="molecule type" value="Genomic_DNA"/>
</dbReference>
<dbReference type="EMBL" id="CH471201">
    <property type="protein sequence ID" value="EAW50952.1"/>
    <property type="molecule type" value="Genomic_DNA"/>
</dbReference>
<dbReference type="EMBL" id="BC028404">
    <property type="protein sequence ID" value="AAH28404.1"/>
    <property type="status" value="ALT_INIT"/>
    <property type="molecule type" value="mRNA"/>
</dbReference>
<dbReference type="CCDS" id="CCDS5512.2">
    <molecule id="Q8TAG5-1"/>
</dbReference>
<dbReference type="CCDS" id="CCDS83185.1">
    <molecule id="Q8TAG5-2"/>
</dbReference>
<dbReference type="RefSeq" id="NP_001304772.1">
    <molecule id="Q8TAG5-2"/>
    <property type="nucleotide sequence ID" value="NM_001317843.2"/>
</dbReference>
<dbReference type="RefSeq" id="NP_872352.2">
    <molecule id="Q8TAG5-1"/>
    <property type="nucleotide sequence ID" value="NM_182546.4"/>
</dbReference>
<dbReference type="SMR" id="Q8TAG5"/>
<dbReference type="BioGRID" id="128776">
    <property type="interactions" value="6"/>
</dbReference>
<dbReference type="FunCoup" id="Q8TAG5">
    <property type="interactions" value="551"/>
</dbReference>
<dbReference type="IntAct" id="Q8TAG5">
    <property type="interactions" value="4"/>
</dbReference>
<dbReference type="MINT" id="Q8TAG5"/>
<dbReference type="STRING" id="9606.ENSP00000303108"/>
<dbReference type="GlyCosmos" id="Q8TAG5">
    <property type="glycosylation" value="2 sites, No reported glycans"/>
</dbReference>
<dbReference type="GlyGen" id="Q8TAG5">
    <property type="glycosylation" value="2 sites"/>
</dbReference>
<dbReference type="iPTMnet" id="Q8TAG5"/>
<dbReference type="PhosphoSitePlus" id="Q8TAG5"/>
<dbReference type="BioMuta" id="VSTM2A"/>
<dbReference type="DMDM" id="308153542"/>
<dbReference type="MassIVE" id="Q8TAG5"/>
<dbReference type="PaxDb" id="9606-ENSP00000384103"/>
<dbReference type="PeptideAtlas" id="Q8TAG5"/>
<dbReference type="ProteomicsDB" id="73879">
    <molecule id="Q8TAG5-1"/>
</dbReference>
<dbReference type="ProteomicsDB" id="73880">
    <molecule id="Q8TAG5-2"/>
</dbReference>
<dbReference type="Antibodypedia" id="13746">
    <property type="antibodies" value="87 antibodies from 16 providers"/>
</dbReference>
<dbReference type="DNASU" id="222008"/>
<dbReference type="Ensembl" id="ENST00000302287.7">
    <molecule id="Q8TAG5-2"/>
    <property type="protein sequence ID" value="ENSP00000303108.3"/>
    <property type="gene ID" value="ENSG00000170419.11"/>
</dbReference>
<dbReference type="Ensembl" id="ENST00000407838.7">
    <molecule id="Q8TAG5-1"/>
    <property type="protein sequence ID" value="ENSP00000384967.3"/>
    <property type="gene ID" value="ENSG00000170419.11"/>
</dbReference>
<dbReference type="GeneID" id="222008"/>
<dbReference type="KEGG" id="hsa:222008"/>
<dbReference type="UCSC" id="uc010kzf.4">
    <molecule id="Q8TAG5-1"/>
    <property type="organism name" value="human"/>
</dbReference>
<dbReference type="AGR" id="HGNC:28499"/>
<dbReference type="CTD" id="222008"/>
<dbReference type="DisGeNET" id="222008"/>
<dbReference type="GeneCards" id="VSTM2A"/>
<dbReference type="HGNC" id="HGNC:28499">
    <property type="gene designation" value="VSTM2A"/>
</dbReference>
<dbReference type="HPA" id="ENSG00000170419">
    <property type="expression patterns" value="Tissue enhanced (adrenal gland, brain, prostate, retina)"/>
</dbReference>
<dbReference type="neXtProt" id="NX_Q8TAG5"/>
<dbReference type="OpenTargets" id="ENSG00000170419"/>
<dbReference type="PharmGKB" id="PA162408875"/>
<dbReference type="VEuPathDB" id="HostDB:ENSG00000170419"/>
<dbReference type="eggNOG" id="ENOG502RKWR">
    <property type="taxonomic scope" value="Eukaryota"/>
</dbReference>
<dbReference type="GeneTree" id="ENSGT00940000160556"/>
<dbReference type="InParanoid" id="Q8TAG5"/>
<dbReference type="OMA" id="EVAGAQX"/>
<dbReference type="OrthoDB" id="8956829at2759"/>
<dbReference type="PAN-GO" id="Q8TAG5">
    <property type="GO annotations" value="1 GO annotation based on evolutionary models"/>
</dbReference>
<dbReference type="PhylomeDB" id="Q8TAG5"/>
<dbReference type="TreeFam" id="TF331739"/>
<dbReference type="PathwayCommons" id="Q8TAG5"/>
<dbReference type="SignaLink" id="Q8TAG5"/>
<dbReference type="BioGRID-ORCS" id="222008">
    <property type="hits" value="8 hits in 1141 CRISPR screens"/>
</dbReference>
<dbReference type="ChiTaRS" id="VSTM2A">
    <property type="organism name" value="human"/>
</dbReference>
<dbReference type="GenomeRNAi" id="222008"/>
<dbReference type="Pharos" id="Q8TAG5">
    <property type="development level" value="Tbio"/>
</dbReference>
<dbReference type="PRO" id="PR:Q8TAG5"/>
<dbReference type="Proteomes" id="UP000005640">
    <property type="component" value="Chromosome 7"/>
</dbReference>
<dbReference type="RNAct" id="Q8TAG5">
    <property type="molecule type" value="protein"/>
</dbReference>
<dbReference type="Bgee" id="ENSG00000170419">
    <property type="expression patterns" value="Expressed in middle temporal gyrus and 112 other cell types or tissues"/>
</dbReference>
<dbReference type="ExpressionAtlas" id="Q8TAG5">
    <property type="expression patterns" value="baseline and differential"/>
</dbReference>
<dbReference type="GO" id="GO:0005576">
    <property type="term" value="C:extracellular region"/>
    <property type="evidence" value="ECO:0000250"/>
    <property type="project" value="UniProtKB"/>
</dbReference>
<dbReference type="GO" id="GO:0016020">
    <property type="term" value="C:membrane"/>
    <property type="evidence" value="ECO:0000318"/>
    <property type="project" value="GO_Central"/>
</dbReference>
<dbReference type="GO" id="GO:0042802">
    <property type="term" value="F:identical protein binding"/>
    <property type="evidence" value="ECO:0000250"/>
    <property type="project" value="UniProtKB"/>
</dbReference>
<dbReference type="GO" id="GO:0030154">
    <property type="term" value="P:cell differentiation"/>
    <property type="evidence" value="ECO:0007669"/>
    <property type="project" value="UniProtKB-KW"/>
</dbReference>
<dbReference type="GO" id="GO:0071773">
    <property type="term" value="P:cellular response to BMP stimulus"/>
    <property type="evidence" value="ECO:0000250"/>
    <property type="project" value="UniProtKB"/>
</dbReference>
<dbReference type="GO" id="GO:0090336">
    <property type="term" value="P:positive regulation of brown fat cell differentiation"/>
    <property type="evidence" value="ECO:0000315"/>
    <property type="project" value="UniProtKB"/>
</dbReference>
<dbReference type="GO" id="GO:0010628">
    <property type="term" value="P:positive regulation of gene expression"/>
    <property type="evidence" value="ECO:0000315"/>
    <property type="project" value="UniProtKB"/>
</dbReference>
<dbReference type="GO" id="GO:0010884">
    <property type="term" value="P:positive regulation of lipid storage"/>
    <property type="evidence" value="ECO:0000315"/>
    <property type="project" value="UniProtKB"/>
</dbReference>
<dbReference type="GO" id="GO:0070352">
    <property type="term" value="P:positive regulation of white fat cell proliferation"/>
    <property type="evidence" value="ECO:0000315"/>
    <property type="project" value="UniProtKB"/>
</dbReference>
<dbReference type="FunFam" id="2.60.40.10:FF:000530">
    <property type="entry name" value="V-set and transmembrane domain containing 2A"/>
    <property type="match status" value="1"/>
</dbReference>
<dbReference type="Gene3D" id="2.60.40.10">
    <property type="entry name" value="Immunoglobulins"/>
    <property type="match status" value="1"/>
</dbReference>
<dbReference type="InterPro" id="IPR007110">
    <property type="entry name" value="Ig-like_dom"/>
</dbReference>
<dbReference type="InterPro" id="IPR036179">
    <property type="entry name" value="Ig-like_dom_sf"/>
</dbReference>
<dbReference type="InterPro" id="IPR013783">
    <property type="entry name" value="Ig-like_fold"/>
</dbReference>
<dbReference type="InterPro" id="IPR003599">
    <property type="entry name" value="Ig_sub"/>
</dbReference>
<dbReference type="InterPro" id="IPR013106">
    <property type="entry name" value="Ig_V-set"/>
</dbReference>
<dbReference type="InterPro" id="IPR051102">
    <property type="entry name" value="IgSF_V-set/TM_domain"/>
</dbReference>
<dbReference type="PANTHER" id="PTHR12207">
    <property type="entry name" value="V-SET AND TRANSMEMBRANE DOMAIN-CONTAINING PROTEIN"/>
    <property type="match status" value="1"/>
</dbReference>
<dbReference type="PANTHER" id="PTHR12207:SF23">
    <property type="entry name" value="V-SET AND TRANSMEMBRANE DOMAIN-CONTAINING PROTEIN 2A"/>
    <property type="match status" value="1"/>
</dbReference>
<dbReference type="Pfam" id="PF07686">
    <property type="entry name" value="V-set"/>
    <property type="match status" value="1"/>
</dbReference>
<dbReference type="SMART" id="SM00409">
    <property type="entry name" value="IG"/>
    <property type="match status" value="1"/>
</dbReference>
<dbReference type="SUPFAM" id="SSF48726">
    <property type="entry name" value="Immunoglobulin"/>
    <property type="match status" value="1"/>
</dbReference>
<dbReference type="PROSITE" id="PS50835">
    <property type="entry name" value="IG_LIKE"/>
    <property type="match status" value="1"/>
</dbReference>
<accession>Q8TAG5</accession>
<accession>A4D2E9</accession>
<accession>B5MC94</accession>
<proteinExistence type="evidence at protein level"/>
<reference key="1">
    <citation type="journal article" date="2003" name="Nature">
        <title>The DNA sequence of human chromosome 7.</title>
        <authorList>
            <person name="Hillier L.W."/>
            <person name="Fulton R.S."/>
            <person name="Fulton L.A."/>
            <person name="Graves T.A."/>
            <person name="Pepin K.H."/>
            <person name="Wagner-McPherson C."/>
            <person name="Layman D."/>
            <person name="Maas J."/>
            <person name="Jaeger S."/>
            <person name="Walker R."/>
            <person name="Wylie K."/>
            <person name="Sekhon M."/>
            <person name="Becker M.C."/>
            <person name="O'Laughlin M.D."/>
            <person name="Schaller M.E."/>
            <person name="Fewell G.A."/>
            <person name="Delehaunty K.D."/>
            <person name="Miner T.L."/>
            <person name="Nash W.E."/>
            <person name="Cordes M."/>
            <person name="Du H."/>
            <person name="Sun H."/>
            <person name="Edwards J."/>
            <person name="Bradshaw-Cordum H."/>
            <person name="Ali J."/>
            <person name="Andrews S."/>
            <person name="Isak A."/>
            <person name="Vanbrunt A."/>
            <person name="Nguyen C."/>
            <person name="Du F."/>
            <person name="Lamar B."/>
            <person name="Courtney L."/>
            <person name="Kalicki J."/>
            <person name="Ozersky P."/>
            <person name="Bielicki L."/>
            <person name="Scott K."/>
            <person name="Holmes A."/>
            <person name="Harkins R."/>
            <person name="Harris A."/>
            <person name="Strong C.M."/>
            <person name="Hou S."/>
            <person name="Tomlinson C."/>
            <person name="Dauphin-Kohlberg S."/>
            <person name="Kozlowicz-Reilly A."/>
            <person name="Leonard S."/>
            <person name="Rohlfing T."/>
            <person name="Rock S.M."/>
            <person name="Tin-Wollam A.-M."/>
            <person name="Abbott A."/>
            <person name="Minx P."/>
            <person name="Maupin R."/>
            <person name="Strowmatt C."/>
            <person name="Latreille P."/>
            <person name="Miller N."/>
            <person name="Johnson D."/>
            <person name="Murray J."/>
            <person name="Woessner J.P."/>
            <person name="Wendl M.C."/>
            <person name="Yang S.-P."/>
            <person name="Schultz B.R."/>
            <person name="Wallis J.W."/>
            <person name="Spieth J."/>
            <person name="Bieri T.A."/>
            <person name="Nelson J.O."/>
            <person name="Berkowicz N."/>
            <person name="Wohldmann P.E."/>
            <person name="Cook L.L."/>
            <person name="Hickenbotham M.T."/>
            <person name="Eldred J."/>
            <person name="Williams D."/>
            <person name="Bedell J.A."/>
            <person name="Mardis E.R."/>
            <person name="Clifton S.W."/>
            <person name="Chissoe S.L."/>
            <person name="Marra M.A."/>
            <person name="Raymond C."/>
            <person name="Haugen E."/>
            <person name="Gillett W."/>
            <person name="Zhou Y."/>
            <person name="James R."/>
            <person name="Phelps K."/>
            <person name="Iadanoto S."/>
            <person name="Bubb K."/>
            <person name="Simms E."/>
            <person name="Levy R."/>
            <person name="Clendenning J."/>
            <person name="Kaul R."/>
            <person name="Kent W.J."/>
            <person name="Furey T.S."/>
            <person name="Baertsch R.A."/>
            <person name="Brent M.R."/>
            <person name="Keibler E."/>
            <person name="Flicek P."/>
            <person name="Bork P."/>
            <person name="Suyama M."/>
            <person name="Bailey J.A."/>
            <person name="Portnoy M.E."/>
            <person name="Torrents D."/>
            <person name="Chinwalla A.T."/>
            <person name="Gish W.R."/>
            <person name="Eddy S.R."/>
            <person name="McPherson J.D."/>
            <person name="Olson M.V."/>
            <person name="Eichler E.E."/>
            <person name="Green E.D."/>
            <person name="Waterston R.H."/>
            <person name="Wilson R.K."/>
        </authorList>
    </citation>
    <scope>NUCLEOTIDE SEQUENCE [LARGE SCALE GENOMIC DNA]</scope>
</reference>
<reference key="2">
    <citation type="journal article" date="2003" name="Science">
        <title>Human chromosome 7: DNA sequence and biology.</title>
        <authorList>
            <person name="Scherer S.W."/>
            <person name="Cheung J."/>
            <person name="MacDonald J.R."/>
            <person name="Osborne L.R."/>
            <person name="Nakabayashi K."/>
            <person name="Herbrick J.-A."/>
            <person name="Carson A.R."/>
            <person name="Parker-Katiraee L."/>
            <person name="Skaug J."/>
            <person name="Khaja R."/>
            <person name="Zhang J."/>
            <person name="Hudek A.K."/>
            <person name="Li M."/>
            <person name="Haddad M."/>
            <person name="Duggan G.E."/>
            <person name="Fernandez B.A."/>
            <person name="Kanematsu E."/>
            <person name="Gentles S."/>
            <person name="Christopoulos C.C."/>
            <person name="Choufani S."/>
            <person name="Kwasnicka D."/>
            <person name="Zheng X.H."/>
            <person name="Lai Z."/>
            <person name="Nusskern D.R."/>
            <person name="Zhang Q."/>
            <person name="Gu Z."/>
            <person name="Lu F."/>
            <person name="Zeesman S."/>
            <person name="Nowaczyk M.J."/>
            <person name="Teshima I."/>
            <person name="Chitayat D."/>
            <person name="Shuman C."/>
            <person name="Weksberg R."/>
            <person name="Zackai E.H."/>
            <person name="Grebe T.A."/>
            <person name="Cox S.R."/>
            <person name="Kirkpatrick S.J."/>
            <person name="Rahman N."/>
            <person name="Friedman J.M."/>
            <person name="Heng H.H.Q."/>
            <person name="Pelicci P.G."/>
            <person name="Lo-Coco F."/>
            <person name="Belloni E."/>
            <person name="Shaffer L.G."/>
            <person name="Pober B."/>
            <person name="Morton C.C."/>
            <person name="Gusella J.F."/>
            <person name="Bruns G.A.P."/>
            <person name="Korf B.R."/>
            <person name="Quade B.J."/>
            <person name="Ligon A.H."/>
            <person name="Ferguson H."/>
            <person name="Higgins A.W."/>
            <person name="Leach N.T."/>
            <person name="Herrick S.R."/>
            <person name="Lemyre E."/>
            <person name="Farra C.G."/>
            <person name="Kim H.-G."/>
            <person name="Summers A.M."/>
            <person name="Gripp K.W."/>
            <person name="Roberts W."/>
            <person name="Szatmari P."/>
            <person name="Winsor E.J.T."/>
            <person name="Grzeschik K.-H."/>
            <person name="Teebi A."/>
            <person name="Minassian B.A."/>
            <person name="Kere J."/>
            <person name="Armengol L."/>
            <person name="Pujana M.A."/>
            <person name="Estivill X."/>
            <person name="Wilson M.D."/>
            <person name="Koop B.F."/>
            <person name="Tosi S."/>
            <person name="Moore G.E."/>
            <person name="Boright A.P."/>
            <person name="Zlotorynski E."/>
            <person name="Kerem B."/>
            <person name="Kroisel P.M."/>
            <person name="Petek E."/>
            <person name="Oscier D.G."/>
            <person name="Mould S.J."/>
            <person name="Doehner H."/>
            <person name="Doehner K."/>
            <person name="Rommens J.M."/>
            <person name="Vincent J.B."/>
            <person name="Venter J.C."/>
            <person name="Li P.W."/>
            <person name="Mural R.J."/>
            <person name="Adams M.D."/>
            <person name="Tsui L.-C."/>
        </authorList>
    </citation>
    <scope>NUCLEOTIDE SEQUENCE [LARGE SCALE GENOMIC DNA]</scope>
</reference>
<reference key="3">
    <citation type="submission" date="2005-07" db="EMBL/GenBank/DDBJ databases">
        <authorList>
            <person name="Mural R.J."/>
            <person name="Istrail S."/>
            <person name="Sutton G.G."/>
            <person name="Florea L."/>
            <person name="Halpern A.L."/>
            <person name="Mobarry C.M."/>
            <person name="Lippert R."/>
            <person name="Walenz B."/>
            <person name="Shatkay H."/>
            <person name="Dew I."/>
            <person name="Miller J.R."/>
            <person name="Flanigan M.J."/>
            <person name="Edwards N.J."/>
            <person name="Bolanos R."/>
            <person name="Fasulo D."/>
            <person name="Halldorsson B.V."/>
            <person name="Hannenhalli S."/>
            <person name="Turner R."/>
            <person name="Yooseph S."/>
            <person name="Lu F."/>
            <person name="Nusskern D.R."/>
            <person name="Shue B.C."/>
            <person name="Zheng X.H."/>
            <person name="Zhong F."/>
            <person name="Delcher A.L."/>
            <person name="Huson D.H."/>
            <person name="Kravitz S.A."/>
            <person name="Mouchard L."/>
            <person name="Reinert K."/>
            <person name="Remington K.A."/>
            <person name="Clark A.G."/>
            <person name="Waterman M.S."/>
            <person name="Eichler E.E."/>
            <person name="Adams M.D."/>
            <person name="Hunkapiller M.W."/>
            <person name="Myers E.W."/>
            <person name="Venter J.C."/>
        </authorList>
    </citation>
    <scope>NUCLEOTIDE SEQUENCE [LARGE SCALE GENOMIC DNA]</scope>
</reference>
<reference key="4">
    <citation type="journal article" date="2004" name="Genome Res.">
        <title>The status, quality, and expansion of the NIH full-length cDNA project: the Mammalian Gene Collection (MGC).</title>
        <authorList>
            <consortium name="The MGC Project Team"/>
        </authorList>
    </citation>
    <scope>NUCLEOTIDE SEQUENCE [LARGE SCALE MRNA] (ISOFORM 2)</scope>
    <scope>VARIANT LYS-84</scope>
    <source>
        <tissue>Brain</tissue>
    </source>
</reference>
<reference key="5">
    <citation type="journal article" date="2017" name="Cell Rep.">
        <title>Amplification of adipogenic commitment by VSTM2A.</title>
        <authorList>
            <person name="Secco B."/>
            <person name="Camire E."/>
            <person name="Briere M.A."/>
            <person name="Caron A."/>
            <person name="Billong A."/>
            <person name="Gelinas Y."/>
            <person name="Lemay A.M."/>
            <person name="Tharp K.M."/>
            <person name="Lee P.L."/>
            <person name="Gobeil S."/>
            <person name="Guimond J.V."/>
            <person name="Patey N."/>
            <person name="Guertin D.A."/>
            <person name="Stahl A."/>
            <person name="Haddad E."/>
            <person name="Marsolais D."/>
            <person name="Bosse Y."/>
            <person name="Birsoy K."/>
            <person name="Laplante M."/>
        </authorList>
    </citation>
    <scope>FUNCTION</scope>
    <scope>SUBCELLULAR LOCATION</scope>
    <scope>DEVELOPMENTAL STAGE</scope>
</reference>
<comment type="function">
    <text evidence="6">Plays a role in the regulation of the early stage of white and brown preadipocyte cell differentiation. Promotes adipogenic commitment of preadipocytes by increasing gene expression of the transcription factor PPARG in a BMP4-dependent signaling pathway.</text>
</comment>
<comment type="subunit">
    <text evidence="1">Homodimer.</text>
</comment>
<comment type="interaction">
    <interactant intactId="EBI-8994042">
        <id>Q8TAG5</id>
    </interactant>
    <interactant intactId="EBI-2339304">
        <id>Q9UKU7</id>
        <label>ACAD8</label>
    </interactant>
    <organismsDiffer>false</organismsDiffer>
    <experiments>2</experiments>
</comment>
<comment type="subcellular location">
    <subcellularLocation>
        <location evidence="1">Secreted</location>
    </subcellularLocation>
    <text evidence="1">Secreted by adipose precursor cells (By similarity). Not detected in the nucleus (PubMed:28052263).</text>
</comment>
<comment type="alternative products">
    <event type="alternative splicing"/>
    <isoform>
        <id>Q8TAG5-1</id>
        <name>1</name>
        <sequence type="displayed"/>
    </isoform>
    <isoform>
        <id>Q8TAG5-2</id>
        <name>2</name>
        <sequence type="described" ref="VSP_039817"/>
    </isoform>
</comment>
<comment type="developmental stage">
    <text>Expressed early in fetal white adipose tissues from 17 to 21 weeks of gestation (at protein level).</text>
</comment>
<comment type="PTM">
    <text evidence="1">N-glycosylated. N-linked glycosylation is critical for secretion but not for preadipocyte cell differentiation activity.</text>
</comment>
<comment type="sequence caution" evidence="8">
    <conflict type="erroneous initiation">
        <sequence resource="EMBL-CDS" id="AAH28404"/>
    </conflict>
    <text>Truncated N-terminus.</text>
</comment>
<comment type="sequence caution" evidence="8">
    <conflict type="erroneous initiation">
        <sequence resource="EMBL-CDS" id="EAL23809"/>
    </conflict>
    <text>Truncated N-terminus.</text>
</comment>